<sequence>MSLKKQQQQSDFSAAPARRPPTLQSYHTSPDPRGKQILRQSASFTALNNPRMDTALPQIQDAPSNSKRNSDEGFGTKPRRKNTFSSFVNSVLGSPRNIKISAPENPVHVTHVGYDNQTGQFTGLPKDWQRMLQASGISKKEQEQHPQTMVDIMRFYERNAAGAGDEEVWHKFDNAILRQGEYPDGMSPASATSPRFPQNHEGSFENPRAAPPPPKPSQSSPVPVLSSTIVPNRVAPKPPTVGLIPSRPPPQPPVVSNRAPAARPANEPVTTPPIPENEPVFVNAPPVVPSAIQSPVQYQQQQERAMAAAQQAIIDKQLDRSRSQPAAAVARPRPRTRQSTAFDVRAKLQAICTPGDPTKKYYNLNKIGQGASGGVFTAYETNTNKCVAIKQMNLDLQPKKDLIINEILVMKDSKHKNIVNFLDSYLHGLDLWVVMEYMEGGSLTDVVTFNIMSEGQIAAVCRETLSGLQHLHSKGVIHRDIKSDNILLSMDGEIKLTDFGFCAQINDSQNKRNTMVGTPYWMAPEVVTRKEYGRKVDIWSLGIMAIEMIEGEPPYLTESPLRALYLIATNGTPKIKDEQNLSPVFRDFLHLALRVDPEKRASAHDLLKHPFMSICEPLNSLAPLVKSARISRAQEKAQKGGA</sequence>
<keyword id="KW-0067">ATP-binding</keyword>
<keyword id="KW-0963">Cytoplasm</keyword>
<keyword id="KW-0418">Kinase</keyword>
<keyword id="KW-0547">Nucleotide-binding</keyword>
<keyword id="KW-0539">Nucleus</keyword>
<keyword id="KW-0589">Pheromone response</keyword>
<keyword id="KW-0723">Serine/threonine-protein kinase</keyword>
<keyword id="KW-0808">Transferase</keyword>
<gene>
    <name type="primary">pakA</name>
    <name type="synonym">ste20</name>
</gene>
<accession>Q2VWQ3</accession>
<comment type="function">
    <text evidence="1">MAP4K component of the MAPK pathway required for the mating pheromone response and the regulation of cell polarity and cell cycle.</text>
</comment>
<comment type="catalytic activity">
    <reaction>
        <text>L-seryl-[protein] + ATP = O-phospho-L-seryl-[protein] + ADP + H(+)</text>
        <dbReference type="Rhea" id="RHEA:17989"/>
        <dbReference type="Rhea" id="RHEA-COMP:9863"/>
        <dbReference type="Rhea" id="RHEA-COMP:11604"/>
        <dbReference type="ChEBI" id="CHEBI:15378"/>
        <dbReference type="ChEBI" id="CHEBI:29999"/>
        <dbReference type="ChEBI" id="CHEBI:30616"/>
        <dbReference type="ChEBI" id="CHEBI:83421"/>
        <dbReference type="ChEBI" id="CHEBI:456216"/>
        <dbReference type="EC" id="2.7.11.1"/>
    </reaction>
</comment>
<comment type="catalytic activity">
    <reaction>
        <text>L-threonyl-[protein] + ATP = O-phospho-L-threonyl-[protein] + ADP + H(+)</text>
        <dbReference type="Rhea" id="RHEA:46608"/>
        <dbReference type="Rhea" id="RHEA-COMP:11060"/>
        <dbReference type="Rhea" id="RHEA-COMP:11605"/>
        <dbReference type="ChEBI" id="CHEBI:15378"/>
        <dbReference type="ChEBI" id="CHEBI:30013"/>
        <dbReference type="ChEBI" id="CHEBI:30616"/>
        <dbReference type="ChEBI" id="CHEBI:61977"/>
        <dbReference type="ChEBI" id="CHEBI:456216"/>
        <dbReference type="EC" id="2.7.11.1"/>
    </reaction>
</comment>
<comment type="subcellular location">
    <subcellularLocation>
        <location evidence="1">Cytoplasm</location>
    </subcellularLocation>
    <subcellularLocation>
        <location evidence="1">Nucleus</location>
    </subcellularLocation>
</comment>
<comment type="similarity">
    <text evidence="6">Belongs to the protein kinase superfamily. STE Ser/Thr protein kinase family. STE20 subfamily.</text>
</comment>
<protein>
    <recommendedName>
        <fullName>Serine/threonine-protein kinase pakA</fullName>
        <ecNumber>2.7.11.1</ecNumber>
    </recommendedName>
</protein>
<proteinExistence type="inferred from homology"/>
<dbReference type="EC" id="2.7.11.1"/>
<dbReference type="EMBL" id="AY621630">
    <property type="protein sequence ID" value="AAU88248.1"/>
    <property type="molecule type" value="Genomic_DNA"/>
</dbReference>
<dbReference type="SMR" id="Q2VWQ3"/>
<dbReference type="VEuPathDB" id="FungiDB:PMAA_030430"/>
<dbReference type="GO" id="GO:0005737">
    <property type="term" value="C:cytoplasm"/>
    <property type="evidence" value="ECO:0007669"/>
    <property type="project" value="UniProtKB-SubCell"/>
</dbReference>
<dbReference type="GO" id="GO:0005634">
    <property type="term" value="C:nucleus"/>
    <property type="evidence" value="ECO:0007669"/>
    <property type="project" value="UniProtKB-SubCell"/>
</dbReference>
<dbReference type="GO" id="GO:0005524">
    <property type="term" value="F:ATP binding"/>
    <property type="evidence" value="ECO:0007669"/>
    <property type="project" value="UniProtKB-KW"/>
</dbReference>
<dbReference type="GO" id="GO:0106310">
    <property type="term" value="F:protein serine kinase activity"/>
    <property type="evidence" value="ECO:0007669"/>
    <property type="project" value="RHEA"/>
</dbReference>
<dbReference type="GO" id="GO:0004674">
    <property type="term" value="F:protein serine/threonine kinase activity"/>
    <property type="evidence" value="ECO:0007669"/>
    <property type="project" value="UniProtKB-KW"/>
</dbReference>
<dbReference type="GO" id="GO:0019236">
    <property type="term" value="P:response to pheromone"/>
    <property type="evidence" value="ECO:0007669"/>
    <property type="project" value="UniProtKB-KW"/>
</dbReference>
<dbReference type="CDD" id="cd01093">
    <property type="entry name" value="CRIB_PAK_like"/>
    <property type="match status" value="1"/>
</dbReference>
<dbReference type="CDD" id="cd06614">
    <property type="entry name" value="STKc_PAK"/>
    <property type="match status" value="1"/>
</dbReference>
<dbReference type="FunFam" id="1.10.510.10:FF:000011">
    <property type="entry name" value="Non-specific serine/threonine protein kinase"/>
    <property type="match status" value="1"/>
</dbReference>
<dbReference type="FunFam" id="3.30.200.20:FF:000385">
    <property type="entry name" value="Non-specific serine/threonine protein kinase"/>
    <property type="match status" value="1"/>
</dbReference>
<dbReference type="FunFam" id="3.90.810.10:FF:000007">
    <property type="entry name" value="Non-specific serine/threonine protein kinase"/>
    <property type="match status" value="1"/>
</dbReference>
<dbReference type="Gene3D" id="3.90.810.10">
    <property type="entry name" value="CRIB domain"/>
    <property type="match status" value="1"/>
</dbReference>
<dbReference type="Gene3D" id="3.30.200.20">
    <property type="entry name" value="Phosphorylase Kinase, domain 1"/>
    <property type="match status" value="1"/>
</dbReference>
<dbReference type="Gene3D" id="1.10.510.10">
    <property type="entry name" value="Transferase(Phosphotransferase) domain 1"/>
    <property type="match status" value="1"/>
</dbReference>
<dbReference type="InterPro" id="IPR000095">
    <property type="entry name" value="CRIB_dom"/>
</dbReference>
<dbReference type="InterPro" id="IPR036936">
    <property type="entry name" value="CRIB_dom_sf"/>
</dbReference>
<dbReference type="InterPro" id="IPR011009">
    <property type="entry name" value="Kinase-like_dom_sf"/>
</dbReference>
<dbReference type="InterPro" id="IPR051931">
    <property type="entry name" value="PAK3-like"/>
</dbReference>
<dbReference type="InterPro" id="IPR033923">
    <property type="entry name" value="PAK_BD"/>
</dbReference>
<dbReference type="InterPro" id="IPR000719">
    <property type="entry name" value="Prot_kinase_dom"/>
</dbReference>
<dbReference type="InterPro" id="IPR017441">
    <property type="entry name" value="Protein_kinase_ATP_BS"/>
</dbReference>
<dbReference type="InterPro" id="IPR008271">
    <property type="entry name" value="Ser/Thr_kinase_AS"/>
</dbReference>
<dbReference type="PANTHER" id="PTHR45832">
    <property type="entry name" value="SERINE/THREONINE-PROTEIN KINASE SAMKA-RELATED-RELATED"/>
    <property type="match status" value="1"/>
</dbReference>
<dbReference type="PANTHER" id="PTHR45832:SF22">
    <property type="entry name" value="SERINE_THREONINE-PROTEIN KINASE SAMKA-RELATED"/>
    <property type="match status" value="1"/>
</dbReference>
<dbReference type="Pfam" id="PF00786">
    <property type="entry name" value="PBD"/>
    <property type="match status" value="1"/>
</dbReference>
<dbReference type="Pfam" id="PF00069">
    <property type="entry name" value="Pkinase"/>
    <property type="match status" value="1"/>
</dbReference>
<dbReference type="SMART" id="SM00285">
    <property type="entry name" value="PBD"/>
    <property type="match status" value="1"/>
</dbReference>
<dbReference type="SMART" id="SM00220">
    <property type="entry name" value="S_TKc"/>
    <property type="match status" value="1"/>
</dbReference>
<dbReference type="SUPFAM" id="SSF56112">
    <property type="entry name" value="Protein kinase-like (PK-like)"/>
    <property type="match status" value="1"/>
</dbReference>
<dbReference type="PROSITE" id="PS50108">
    <property type="entry name" value="CRIB"/>
    <property type="match status" value="1"/>
</dbReference>
<dbReference type="PROSITE" id="PS00107">
    <property type="entry name" value="PROTEIN_KINASE_ATP"/>
    <property type="match status" value="1"/>
</dbReference>
<dbReference type="PROSITE" id="PS50011">
    <property type="entry name" value="PROTEIN_KINASE_DOM"/>
    <property type="match status" value="1"/>
</dbReference>
<dbReference type="PROSITE" id="PS00108">
    <property type="entry name" value="PROTEIN_KINASE_ST"/>
    <property type="match status" value="1"/>
</dbReference>
<organism>
    <name type="scientific">Talaromyces marneffei</name>
    <name type="common">Penicillium marneffei</name>
    <dbReference type="NCBI Taxonomy" id="37727"/>
    <lineage>
        <taxon>Eukaryota</taxon>
        <taxon>Fungi</taxon>
        <taxon>Dikarya</taxon>
        <taxon>Ascomycota</taxon>
        <taxon>Pezizomycotina</taxon>
        <taxon>Eurotiomycetes</taxon>
        <taxon>Eurotiomycetidae</taxon>
        <taxon>Eurotiales</taxon>
        <taxon>Trichocomaceae</taxon>
        <taxon>Talaromyces</taxon>
        <taxon>Talaromyces sect. Talaromyces</taxon>
    </lineage>
</organism>
<name>STE20_TALMA</name>
<evidence type="ECO:0000250" key="1"/>
<evidence type="ECO:0000255" key="2">
    <source>
        <dbReference type="PROSITE-ProRule" id="PRU00057"/>
    </source>
</evidence>
<evidence type="ECO:0000255" key="3">
    <source>
        <dbReference type="PROSITE-ProRule" id="PRU00159"/>
    </source>
</evidence>
<evidence type="ECO:0000255" key="4">
    <source>
        <dbReference type="PROSITE-ProRule" id="PRU10027"/>
    </source>
</evidence>
<evidence type="ECO:0000256" key="5">
    <source>
        <dbReference type="SAM" id="MobiDB-lite"/>
    </source>
</evidence>
<evidence type="ECO:0000305" key="6"/>
<reference key="1">
    <citation type="submission" date="2004-05" db="EMBL/GenBank/DDBJ databases">
        <title>pakA, the ste20 homolog from the dimorphic human pathogen Penicillium marneffei, is essential during yeast but not hyphal growth.</title>
        <authorList>
            <person name="Boyce K.J."/>
            <person name="Hynes M.J."/>
            <person name="Andrianopoulos A."/>
        </authorList>
    </citation>
    <scope>NUCLEOTIDE SEQUENCE [GENOMIC DNA]</scope>
</reference>
<feature type="chain" id="PRO_0000237634" description="Serine/threonine-protein kinase pakA">
    <location>
        <begin position="1"/>
        <end position="642"/>
    </location>
</feature>
<feature type="domain" description="CRIB" evidence="2">
    <location>
        <begin position="100"/>
        <end position="113"/>
    </location>
</feature>
<feature type="domain" description="Protein kinase" evidence="3">
    <location>
        <begin position="361"/>
        <end position="612"/>
    </location>
</feature>
<feature type="region of interest" description="Disordered" evidence="5">
    <location>
        <begin position="1"/>
        <end position="82"/>
    </location>
</feature>
<feature type="region of interest" description="Disordered" evidence="5">
    <location>
        <begin position="180"/>
        <end position="276"/>
    </location>
</feature>
<feature type="region of interest" description="Disordered" evidence="5">
    <location>
        <begin position="317"/>
        <end position="338"/>
    </location>
</feature>
<feature type="compositionally biased region" description="Polar residues" evidence="5">
    <location>
        <begin position="1"/>
        <end position="12"/>
    </location>
</feature>
<feature type="compositionally biased region" description="Polar residues" evidence="5">
    <location>
        <begin position="38"/>
        <end position="48"/>
    </location>
</feature>
<feature type="compositionally biased region" description="Low complexity" evidence="5">
    <location>
        <begin position="217"/>
        <end position="227"/>
    </location>
</feature>
<feature type="compositionally biased region" description="Low complexity" evidence="5">
    <location>
        <begin position="254"/>
        <end position="266"/>
    </location>
</feature>
<feature type="active site" description="Proton acceptor" evidence="3 4">
    <location>
        <position position="480"/>
    </location>
</feature>
<feature type="binding site" evidence="3">
    <location>
        <begin position="367"/>
        <end position="375"/>
    </location>
    <ligand>
        <name>ATP</name>
        <dbReference type="ChEBI" id="CHEBI:30616"/>
    </ligand>
</feature>
<feature type="binding site" evidence="3">
    <location>
        <position position="390"/>
    </location>
    <ligand>
        <name>ATP</name>
        <dbReference type="ChEBI" id="CHEBI:30616"/>
    </ligand>
</feature>